<proteinExistence type="evidence at transcript level"/>
<protein>
    <recommendedName>
        <fullName evidence="5">tRNA methyltransferase 10 homolog C</fullName>
    </recommendedName>
    <alternativeName>
        <fullName evidence="2">Mitochondrial ribonuclease P protein 1</fullName>
        <shortName evidence="2">Mitochondrial RNase P protein 1</shortName>
    </alternativeName>
    <alternativeName>
        <fullName evidence="2">RNA (guanine-9-)-methyltransferase domain-containing protein 1</fullName>
    </alternativeName>
    <alternativeName>
        <fullName evidence="2">mRNA methyladenosine-N(1)-methyltransferase</fullName>
        <ecNumber evidence="2">2.1.1.-</ecNumber>
    </alternativeName>
    <alternativeName>
        <fullName evidence="2">tRNA (adenine(9)-N(1))-methyltransferase</fullName>
        <ecNumber evidence="2">2.1.1.218</ecNumber>
    </alternativeName>
    <alternativeName>
        <fullName evidence="2">tRNA (guanine(9)-N(1))-methyltransferase</fullName>
        <ecNumber evidence="2">2.1.1.221</ecNumber>
    </alternativeName>
</protein>
<keyword id="KW-0175">Coiled coil</keyword>
<keyword id="KW-0489">Methyltransferase</keyword>
<keyword id="KW-0496">Mitochondrion</keyword>
<keyword id="KW-1135">Mitochondrion nucleoid</keyword>
<keyword id="KW-0597">Phosphoprotein</keyword>
<keyword id="KW-1185">Reference proteome</keyword>
<keyword id="KW-0949">S-adenosyl-L-methionine</keyword>
<keyword id="KW-0808">Transferase</keyword>
<keyword id="KW-0809">Transit peptide</keyword>
<keyword id="KW-0819">tRNA processing</keyword>
<feature type="transit peptide" description="Mitochondrion" evidence="3">
    <location>
        <begin position="1"/>
        <end position="35"/>
    </location>
</feature>
<feature type="chain" id="PRO_0000311311" description="tRNA methyltransferase 10 homolog C">
    <location>
        <begin position="36"/>
        <end position="414"/>
    </location>
</feature>
<feature type="domain" description="SAM-dependent MTase TRM10-type" evidence="4">
    <location>
        <begin position="186"/>
        <end position="378"/>
    </location>
</feature>
<feature type="coiled-coil region" evidence="3">
    <location>
        <begin position="133"/>
        <end position="162"/>
    </location>
</feature>
<feature type="modified residue" description="Phosphoserine" evidence="1">
    <location>
        <position position="79"/>
    </location>
</feature>
<comment type="function">
    <text evidence="2">Mitochondrial tRNA N(1)-methyltransferase involved in mitochondrial tRNA maturation. Component of mitochondrial ribonuclease P, a complex composed of TRMT10C/MRPP1, HSD17B10/MRPP2 and PRORP/MRPP3, which cleaves tRNA molecules in their 5'-ends. Together with HSD17B10/MRPP2, forms a subcomplex of the mitochondrial ribonuclease P, named MRPP1-MRPP2 subcomplex, which displays functions that are independent of the ribonuclease P activity. The MRPP1-MRPP2 subcomplex catalyzes the formation of N(1)-methylguanine and N(1)-methyladenine at position 9 (m1G9 and m1A9, respectively) in tRNAs; TRMT10C/MRPP1 acting as the catalytic N(1)-methyltransferase subunit. The MRPP1-MRPP2 subcomplex also acts as a tRNA maturation platform: following 5'-end cleavage by the mitochondrial ribonuclease P complex, the MRPP1-MRPP2 subcomplex enhances the efficiency of 3'-processing catalyzed by ELAC2, retains the tRNA product after ELAC2 processing and presents the nascent tRNA to the mitochondrial CCA tRNA nucleotidyltransferase TRNT1 enzyme. In addition to tRNA N(1)-methyltransferase activity, TRMT10C/MRPP1 also acts as a mRNA N(1)-methyltransferase by mediating methylation of adenosine residues at the N(1) position of MT-ND5 mRNA. Associates with mitochondrial DNA complexes at the nucleoids to initiate RNA processing and ribosome assembly.</text>
</comment>
<comment type="catalytic activity">
    <reaction evidence="2">
        <text>adenosine(9) in tRNA + S-adenosyl-L-methionine = N(1)-methyladenosine(9) in tRNA + S-adenosyl-L-homocysteine + H(+)</text>
        <dbReference type="Rhea" id="RHEA:43148"/>
        <dbReference type="Rhea" id="RHEA-COMP:10363"/>
        <dbReference type="Rhea" id="RHEA-COMP:10364"/>
        <dbReference type="ChEBI" id="CHEBI:15378"/>
        <dbReference type="ChEBI" id="CHEBI:57856"/>
        <dbReference type="ChEBI" id="CHEBI:59789"/>
        <dbReference type="ChEBI" id="CHEBI:74411"/>
        <dbReference type="ChEBI" id="CHEBI:74491"/>
        <dbReference type="EC" id="2.1.1.218"/>
    </reaction>
</comment>
<comment type="catalytic activity">
    <reaction evidence="2">
        <text>guanosine(9) in tRNA + S-adenosyl-L-methionine = N(1)-methylguanosine(9) in tRNA + S-adenosyl-L-homocysteine + H(+)</text>
        <dbReference type="Rhea" id="RHEA:43156"/>
        <dbReference type="Rhea" id="RHEA-COMP:10367"/>
        <dbReference type="Rhea" id="RHEA-COMP:10368"/>
        <dbReference type="ChEBI" id="CHEBI:15378"/>
        <dbReference type="ChEBI" id="CHEBI:57856"/>
        <dbReference type="ChEBI" id="CHEBI:59789"/>
        <dbReference type="ChEBI" id="CHEBI:73542"/>
        <dbReference type="ChEBI" id="CHEBI:74269"/>
        <dbReference type="EC" id="2.1.1.221"/>
    </reaction>
</comment>
<comment type="catalytic activity">
    <reaction evidence="2">
        <text>an adenosine in mRNA + S-adenosyl-L-methionine = an N(1)-methyladenosine in mRNA + S-adenosyl-L-homocysteine + H(+)</text>
        <dbReference type="Rhea" id="RHEA:55392"/>
        <dbReference type="Rhea" id="RHEA-COMP:12414"/>
        <dbReference type="Rhea" id="RHEA-COMP:12415"/>
        <dbReference type="ChEBI" id="CHEBI:15378"/>
        <dbReference type="ChEBI" id="CHEBI:57856"/>
        <dbReference type="ChEBI" id="CHEBI:59789"/>
        <dbReference type="ChEBI" id="CHEBI:74411"/>
        <dbReference type="ChEBI" id="CHEBI:74491"/>
    </reaction>
</comment>
<comment type="subunit">
    <text evidence="2">Component of mitochondrial ribonuclease P, a complex composed of TRMT10C/MRPP1, HSD17B10/MRPP2 and PRORP/MRPP3. Interacts with HSD17B10/MRPP2; forming the MRPP1-MRPP2 subcomplex of the mitochondrial ribonuclease P complex. Interacts with GRSF1.</text>
</comment>
<comment type="subcellular location">
    <subcellularLocation>
        <location evidence="2">Mitochondrion matrix</location>
        <location evidence="2">Mitochondrion nucleoid</location>
    </subcellularLocation>
</comment>
<comment type="similarity">
    <text evidence="4">Belongs to the class IV-like SAM-binding methyltransferase superfamily. TRM10 family.</text>
</comment>
<reference key="1">
    <citation type="journal article" date="2004" name="Genome Res.">
        <title>The status, quality, and expansion of the NIH full-length cDNA project: the Mammalian Gene Collection (MGC).</title>
        <authorList>
            <consortium name="The MGC Project Team"/>
        </authorList>
    </citation>
    <scope>NUCLEOTIDE SEQUENCE [LARGE SCALE MRNA]</scope>
    <source>
        <tissue>Heart</tissue>
    </source>
</reference>
<name>TM10C_RAT</name>
<gene>
    <name evidence="6" type="primary">Trmt10c</name>
    <name evidence="2" type="synonym">Mrpp1</name>
    <name evidence="2" type="synonym">Rg9mtd1</name>
</gene>
<organism>
    <name type="scientific">Rattus norvegicus</name>
    <name type="common">Rat</name>
    <dbReference type="NCBI Taxonomy" id="10116"/>
    <lineage>
        <taxon>Eukaryota</taxon>
        <taxon>Metazoa</taxon>
        <taxon>Chordata</taxon>
        <taxon>Craniata</taxon>
        <taxon>Vertebrata</taxon>
        <taxon>Euteleostomi</taxon>
        <taxon>Mammalia</taxon>
        <taxon>Eutheria</taxon>
        <taxon>Euarchontoglires</taxon>
        <taxon>Glires</taxon>
        <taxon>Rodentia</taxon>
        <taxon>Myomorpha</taxon>
        <taxon>Muroidea</taxon>
        <taxon>Muridae</taxon>
        <taxon>Murinae</taxon>
        <taxon>Rattus</taxon>
    </lineage>
</organism>
<accession>Q5U2R4</accession>
<sequence>MNVTVRFLRPFARYLVPYTFHRTRSNSYSRVLQRYVSSKVPSLPCHNKDSTSPPEQLELDGWKTTMKSSIQENGVSVVSDKDEDSLAATRELIEMWRLLGKEVPEHITEEELKTLMECASKSAKKKYLRYLYGKEMMKKAKQMKKEMKAAAREEAKRARSLEPSTGEEQRDFMFLRLWDRQTNIALGWKGVQAMQFGQPLVFDMAYDNYMKPSELQNTVSQLLESEGWNRRNVDPFHIYFCNLEVDGAYHRELVKRYGEKWDKLLLTATEKSPVDLFPKDSIIYLTADSPNVMTTFKHDKIYIIGSFVDKNTQTGTSLAKAKRQNLATECLPLDKYLQWDVGNKNLTLDQMIRILLCLKNTGNWEEALKFVPRRKHTGYLEVPEHSQAAFRKLKKTKTLNSFRKGSLNVHMWKR</sequence>
<evidence type="ECO:0000250" key="1">
    <source>
        <dbReference type="UniProtKB" id="Q3UFY8"/>
    </source>
</evidence>
<evidence type="ECO:0000250" key="2">
    <source>
        <dbReference type="UniProtKB" id="Q7L0Y3"/>
    </source>
</evidence>
<evidence type="ECO:0000255" key="3"/>
<evidence type="ECO:0000255" key="4">
    <source>
        <dbReference type="PROSITE-ProRule" id="PRU01012"/>
    </source>
</evidence>
<evidence type="ECO:0000305" key="5"/>
<evidence type="ECO:0000312" key="6">
    <source>
        <dbReference type="RGD" id="1306333"/>
    </source>
</evidence>
<dbReference type="EC" id="2.1.1.-" evidence="2"/>
<dbReference type="EC" id="2.1.1.218" evidence="2"/>
<dbReference type="EC" id="2.1.1.221" evidence="2"/>
<dbReference type="EMBL" id="BC085895">
    <property type="protein sequence ID" value="AAH85895.1"/>
    <property type="molecule type" value="mRNA"/>
</dbReference>
<dbReference type="RefSeq" id="NP_001008338.1">
    <property type="nucleotide sequence ID" value="NM_001008337.1"/>
</dbReference>
<dbReference type="SMR" id="Q5U2R4"/>
<dbReference type="BioGRID" id="257741">
    <property type="interactions" value="1"/>
</dbReference>
<dbReference type="FunCoup" id="Q5U2R4">
    <property type="interactions" value="2951"/>
</dbReference>
<dbReference type="STRING" id="10116.ENSRNOP00000002198"/>
<dbReference type="PhosphoSitePlus" id="Q5U2R4"/>
<dbReference type="PaxDb" id="10116-ENSRNOP00000002198"/>
<dbReference type="Ensembl" id="ENSRNOT00000002198.6">
    <property type="protein sequence ID" value="ENSRNOP00000002198.3"/>
    <property type="gene ID" value="ENSRNOG00000039567.4"/>
</dbReference>
<dbReference type="GeneID" id="304012"/>
<dbReference type="KEGG" id="rno:304012"/>
<dbReference type="UCSC" id="RGD:1306333">
    <property type="organism name" value="rat"/>
</dbReference>
<dbReference type="AGR" id="RGD:1306333"/>
<dbReference type="CTD" id="54931"/>
<dbReference type="RGD" id="1306333">
    <property type="gene designation" value="Trmt10c"/>
</dbReference>
<dbReference type="eggNOG" id="KOG2967">
    <property type="taxonomic scope" value="Eukaryota"/>
</dbReference>
<dbReference type="GeneTree" id="ENSGT00530000063169"/>
<dbReference type="HOGENOM" id="CLU_034384_3_1_1"/>
<dbReference type="InParanoid" id="Q5U2R4"/>
<dbReference type="OMA" id="TIMECVS"/>
<dbReference type="OrthoDB" id="70767at9989"/>
<dbReference type="PhylomeDB" id="Q5U2R4"/>
<dbReference type="TreeFam" id="TF319795"/>
<dbReference type="PRO" id="PR:Q5U2R4"/>
<dbReference type="Proteomes" id="UP000002494">
    <property type="component" value="Chromosome 11"/>
</dbReference>
<dbReference type="Bgee" id="ENSRNOG00000039567">
    <property type="expression patterns" value="Expressed in thymus and 19 other cell types or tissues"/>
</dbReference>
<dbReference type="GO" id="GO:0042645">
    <property type="term" value="C:mitochondrial nucleoid"/>
    <property type="evidence" value="ECO:0000250"/>
    <property type="project" value="UniProtKB"/>
</dbReference>
<dbReference type="GO" id="GO:0030678">
    <property type="term" value="C:mitochondrial ribonuclease P complex"/>
    <property type="evidence" value="ECO:0000266"/>
    <property type="project" value="RGD"/>
</dbReference>
<dbReference type="GO" id="GO:0005739">
    <property type="term" value="C:mitochondrion"/>
    <property type="evidence" value="ECO:0000250"/>
    <property type="project" value="UniProtKB"/>
</dbReference>
<dbReference type="GO" id="GO:0005654">
    <property type="term" value="C:nucleoplasm"/>
    <property type="evidence" value="ECO:0000318"/>
    <property type="project" value="GO_Central"/>
</dbReference>
<dbReference type="GO" id="GO:0005634">
    <property type="term" value="C:nucleus"/>
    <property type="evidence" value="ECO:0000318"/>
    <property type="project" value="GO_Central"/>
</dbReference>
<dbReference type="GO" id="GO:0043527">
    <property type="term" value="C:tRNA methyltransferase complex"/>
    <property type="evidence" value="ECO:0000266"/>
    <property type="project" value="RGD"/>
</dbReference>
<dbReference type="GO" id="GO:0042802">
    <property type="term" value="F:identical protein binding"/>
    <property type="evidence" value="ECO:0000266"/>
    <property type="project" value="RGD"/>
</dbReference>
<dbReference type="GO" id="GO:0160106">
    <property type="term" value="F:tRNA (adenine(9)-N1)-methyltransferase activity"/>
    <property type="evidence" value="ECO:0000266"/>
    <property type="project" value="RGD"/>
</dbReference>
<dbReference type="GO" id="GO:0052905">
    <property type="term" value="F:tRNA (guanosine(9)-N1)-methyltransferase activity"/>
    <property type="evidence" value="ECO:0000266"/>
    <property type="project" value="RGD"/>
</dbReference>
<dbReference type="GO" id="GO:0000049">
    <property type="term" value="F:tRNA binding"/>
    <property type="evidence" value="ECO:0000250"/>
    <property type="project" value="UniProtKB"/>
</dbReference>
<dbReference type="GO" id="GO:0000964">
    <property type="term" value="P:mitochondrial RNA 5'-end processing"/>
    <property type="evidence" value="ECO:0000250"/>
    <property type="project" value="UniProtKB"/>
</dbReference>
<dbReference type="GO" id="GO:1990180">
    <property type="term" value="P:mitochondrial tRNA 3'-end processing"/>
    <property type="evidence" value="ECO:0000266"/>
    <property type="project" value="RGD"/>
</dbReference>
<dbReference type="GO" id="GO:0097745">
    <property type="term" value="P:mitochondrial tRNA 5'-end processing"/>
    <property type="evidence" value="ECO:0000250"/>
    <property type="project" value="UniProtKB"/>
</dbReference>
<dbReference type="GO" id="GO:0070901">
    <property type="term" value="P:mitochondrial tRNA methylation"/>
    <property type="evidence" value="ECO:0000266"/>
    <property type="project" value="RGD"/>
</dbReference>
<dbReference type="GO" id="GO:0090646">
    <property type="term" value="P:mitochondrial tRNA processing"/>
    <property type="evidence" value="ECO:0000250"/>
    <property type="project" value="UniProtKB"/>
</dbReference>
<dbReference type="GO" id="GO:0006397">
    <property type="term" value="P:mRNA processing"/>
    <property type="evidence" value="ECO:0000250"/>
    <property type="project" value="UniProtKB"/>
</dbReference>
<dbReference type="GO" id="GO:0070131">
    <property type="term" value="P:positive regulation of mitochondrial translation"/>
    <property type="evidence" value="ECO:0000250"/>
    <property type="project" value="UniProtKB"/>
</dbReference>
<dbReference type="CDD" id="cd18102">
    <property type="entry name" value="Trm10_MRRP1"/>
    <property type="match status" value="1"/>
</dbReference>
<dbReference type="FunFam" id="3.40.1280.30:FF:000003">
    <property type="entry name" value="tRNA methyltransferase 10C, mitochondrial RNase P subunit"/>
    <property type="match status" value="1"/>
</dbReference>
<dbReference type="Gene3D" id="3.40.1280.30">
    <property type="match status" value="1"/>
</dbReference>
<dbReference type="InterPro" id="IPR028564">
    <property type="entry name" value="MT_TRM10-typ"/>
</dbReference>
<dbReference type="InterPro" id="IPR038459">
    <property type="entry name" value="MT_TRM10-typ_sf"/>
</dbReference>
<dbReference type="InterPro" id="IPR025812">
    <property type="entry name" value="Trm10_C_MTase_dom"/>
</dbReference>
<dbReference type="InterPro" id="IPR007356">
    <property type="entry name" value="tRNA_m1G_MeTrfase_euk"/>
</dbReference>
<dbReference type="InterPro" id="IPR016009">
    <property type="entry name" value="tRNA_MeTrfase_TRMD/TRM10"/>
</dbReference>
<dbReference type="PANTHER" id="PTHR13563">
    <property type="entry name" value="TRNA (GUANINE-9-) METHYLTRANSFERASE"/>
    <property type="match status" value="1"/>
</dbReference>
<dbReference type="PANTHER" id="PTHR13563:SF5">
    <property type="entry name" value="TRNA METHYLTRANSFERASE 10 HOMOLOG C"/>
    <property type="match status" value="1"/>
</dbReference>
<dbReference type="Pfam" id="PF01746">
    <property type="entry name" value="tRNA_m1G_MT"/>
    <property type="match status" value="1"/>
</dbReference>
<dbReference type="PROSITE" id="PS51675">
    <property type="entry name" value="SAM_MT_TRM10"/>
    <property type="match status" value="1"/>
</dbReference>